<name>MTNC_YERPS</name>
<dbReference type="EC" id="3.1.3.77" evidence="1"/>
<dbReference type="EMBL" id="BX936398">
    <property type="protein sequence ID" value="CAH20115.1"/>
    <property type="molecule type" value="Genomic_DNA"/>
</dbReference>
<dbReference type="RefSeq" id="WP_011191832.1">
    <property type="nucleotide sequence ID" value="NC_006155.1"/>
</dbReference>
<dbReference type="SMR" id="Q66E18"/>
<dbReference type="GeneID" id="49787071"/>
<dbReference type="KEGG" id="ypo:BZ17_1671"/>
<dbReference type="KEGG" id="yps:YPTB0875"/>
<dbReference type="PATRIC" id="fig|273123.14.peg.1779"/>
<dbReference type="UniPathway" id="UPA00904">
    <property type="reaction ID" value="UER00876"/>
</dbReference>
<dbReference type="UniPathway" id="UPA00904">
    <property type="reaction ID" value="UER00877"/>
</dbReference>
<dbReference type="Proteomes" id="UP000001011">
    <property type="component" value="Chromosome"/>
</dbReference>
<dbReference type="GO" id="GO:0043715">
    <property type="term" value="F:2,3-diketo-5-methylthiopentyl-1-phosphate enolase activity"/>
    <property type="evidence" value="ECO:0007669"/>
    <property type="project" value="UniProtKB-UniRule"/>
</dbReference>
<dbReference type="GO" id="GO:0043716">
    <property type="term" value="F:2-hydroxy-3-keto-5-methylthiopentenyl-1-phosphate phosphatase activity"/>
    <property type="evidence" value="ECO:0007669"/>
    <property type="project" value="UniProtKB-UniRule"/>
</dbReference>
<dbReference type="GO" id="GO:0043874">
    <property type="term" value="F:acireductone synthase activity"/>
    <property type="evidence" value="ECO:0007669"/>
    <property type="project" value="UniProtKB-EC"/>
</dbReference>
<dbReference type="GO" id="GO:0000287">
    <property type="term" value="F:magnesium ion binding"/>
    <property type="evidence" value="ECO:0007669"/>
    <property type="project" value="UniProtKB-UniRule"/>
</dbReference>
<dbReference type="GO" id="GO:0019509">
    <property type="term" value="P:L-methionine salvage from methylthioadenosine"/>
    <property type="evidence" value="ECO:0007669"/>
    <property type="project" value="UniProtKB-UniRule"/>
</dbReference>
<dbReference type="CDD" id="cd01629">
    <property type="entry name" value="HAD_EP"/>
    <property type="match status" value="1"/>
</dbReference>
<dbReference type="Gene3D" id="1.10.720.60">
    <property type="match status" value="1"/>
</dbReference>
<dbReference type="Gene3D" id="3.40.50.1000">
    <property type="entry name" value="HAD superfamily/HAD-like"/>
    <property type="match status" value="1"/>
</dbReference>
<dbReference type="HAMAP" id="MF_01681">
    <property type="entry name" value="Salvage_MtnC"/>
    <property type="match status" value="1"/>
</dbReference>
<dbReference type="InterPro" id="IPR023943">
    <property type="entry name" value="Enolase-ppase_E1"/>
</dbReference>
<dbReference type="InterPro" id="IPR036412">
    <property type="entry name" value="HAD-like_sf"/>
</dbReference>
<dbReference type="InterPro" id="IPR006439">
    <property type="entry name" value="HAD-SF_hydro_IA"/>
</dbReference>
<dbReference type="InterPro" id="IPR023214">
    <property type="entry name" value="HAD_sf"/>
</dbReference>
<dbReference type="NCBIfam" id="TIGR01691">
    <property type="entry name" value="enolase-ppase"/>
    <property type="match status" value="1"/>
</dbReference>
<dbReference type="NCBIfam" id="TIGR01549">
    <property type="entry name" value="HAD-SF-IA-v1"/>
    <property type="match status" value="1"/>
</dbReference>
<dbReference type="PANTHER" id="PTHR20371">
    <property type="entry name" value="ENOLASE-PHOSPHATASE E1"/>
    <property type="match status" value="1"/>
</dbReference>
<dbReference type="PANTHER" id="PTHR20371:SF1">
    <property type="entry name" value="ENOLASE-PHOSPHATASE E1"/>
    <property type="match status" value="1"/>
</dbReference>
<dbReference type="Pfam" id="PF00702">
    <property type="entry name" value="Hydrolase"/>
    <property type="match status" value="1"/>
</dbReference>
<dbReference type="PRINTS" id="PR00413">
    <property type="entry name" value="HADHALOGNASE"/>
</dbReference>
<dbReference type="SFLD" id="SFLDF00044">
    <property type="entry name" value="enolase-phosphatase"/>
    <property type="match status" value="1"/>
</dbReference>
<dbReference type="SFLD" id="SFLDS00003">
    <property type="entry name" value="Haloacid_Dehalogenase"/>
    <property type="match status" value="1"/>
</dbReference>
<dbReference type="SUPFAM" id="SSF56784">
    <property type="entry name" value="HAD-like"/>
    <property type="match status" value="1"/>
</dbReference>
<sequence length="229" mass="25857">MIQAIVTDIEGTTTDIRFVHQVLFPYARERLTPFLRAHQQDDDITALLVDLRREIAQPDADIETLITVLHGFMDEDRKSTVLKAIQGIIWRTGYLQADFRGHVYPEVAQQLADWHQQGLKLYVYSSGSVAAQKLLFGYSDAGDLCPLFSGYFDTHVGAKRDVSAYQKIANQLGIAPQALLFLSDIRQELDAAQLAGWHTCQLIRDLPDNDSAHPQVNRFDQIVLSLFTE</sequence>
<evidence type="ECO:0000255" key="1">
    <source>
        <dbReference type="HAMAP-Rule" id="MF_01681"/>
    </source>
</evidence>
<reference key="1">
    <citation type="journal article" date="2004" name="Proc. Natl. Acad. Sci. U.S.A.">
        <title>Insights into the evolution of Yersinia pestis through whole-genome comparison with Yersinia pseudotuberculosis.</title>
        <authorList>
            <person name="Chain P.S.G."/>
            <person name="Carniel E."/>
            <person name="Larimer F.W."/>
            <person name="Lamerdin J."/>
            <person name="Stoutland P.O."/>
            <person name="Regala W.M."/>
            <person name="Georgescu A.M."/>
            <person name="Vergez L.M."/>
            <person name="Land M.L."/>
            <person name="Motin V.L."/>
            <person name="Brubaker R.R."/>
            <person name="Fowler J."/>
            <person name="Hinnebusch J."/>
            <person name="Marceau M."/>
            <person name="Medigue C."/>
            <person name="Simonet M."/>
            <person name="Chenal-Francisque V."/>
            <person name="Souza B."/>
            <person name="Dacheux D."/>
            <person name="Elliott J.M."/>
            <person name="Derbise A."/>
            <person name="Hauser L.J."/>
            <person name="Garcia E."/>
        </authorList>
    </citation>
    <scope>NUCLEOTIDE SEQUENCE [LARGE SCALE GENOMIC DNA]</scope>
    <source>
        <strain>IP32953</strain>
    </source>
</reference>
<keyword id="KW-0028">Amino-acid biosynthesis</keyword>
<keyword id="KW-0378">Hydrolase</keyword>
<keyword id="KW-0460">Magnesium</keyword>
<keyword id="KW-0479">Metal-binding</keyword>
<keyword id="KW-0486">Methionine biosynthesis</keyword>
<comment type="function">
    <text evidence="1">Bifunctional enzyme that catalyzes the enolization of 2,3-diketo-5-methylthiopentyl-1-phosphate (DK-MTP-1-P) into the intermediate 2-hydroxy-3-keto-5-methylthiopentenyl-1-phosphate (HK-MTPenyl-1-P), which is then dephosphorylated to form the acireductone 1,2-dihydroxy-3-keto-5-methylthiopentene (DHK-MTPene).</text>
</comment>
<comment type="catalytic activity">
    <reaction evidence="1">
        <text>5-methylsulfanyl-2,3-dioxopentyl phosphate + H2O = 1,2-dihydroxy-5-(methylsulfanyl)pent-1-en-3-one + phosphate</text>
        <dbReference type="Rhea" id="RHEA:21700"/>
        <dbReference type="ChEBI" id="CHEBI:15377"/>
        <dbReference type="ChEBI" id="CHEBI:43474"/>
        <dbReference type="ChEBI" id="CHEBI:49252"/>
        <dbReference type="ChEBI" id="CHEBI:58828"/>
        <dbReference type="EC" id="3.1.3.77"/>
    </reaction>
</comment>
<comment type="cofactor">
    <cofactor evidence="1">
        <name>Mg(2+)</name>
        <dbReference type="ChEBI" id="CHEBI:18420"/>
    </cofactor>
    <text evidence="1">Binds 1 Mg(2+) ion per subunit.</text>
</comment>
<comment type="pathway">
    <text evidence="1">Amino-acid biosynthesis; L-methionine biosynthesis via salvage pathway; L-methionine from S-methyl-5-thio-alpha-D-ribose 1-phosphate: step 3/6.</text>
</comment>
<comment type="pathway">
    <text evidence="1">Amino-acid biosynthesis; L-methionine biosynthesis via salvage pathway; L-methionine from S-methyl-5-thio-alpha-D-ribose 1-phosphate: step 4/6.</text>
</comment>
<comment type="subunit">
    <text evidence="1">Monomer.</text>
</comment>
<comment type="similarity">
    <text evidence="1">Belongs to the HAD-like hydrolase superfamily. MasA/MtnC family.</text>
</comment>
<organism>
    <name type="scientific">Yersinia pseudotuberculosis serotype I (strain IP32953)</name>
    <dbReference type="NCBI Taxonomy" id="273123"/>
    <lineage>
        <taxon>Bacteria</taxon>
        <taxon>Pseudomonadati</taxon>
        <taxon>Pseudomonadota</taxon>
        <taxon>Gammaproteobacteria</taxon>
        <taxon>Enterobacterales</taxon>
        <taxon>Yersiniaceae</taxon>
        <taxon>Yersinia</taxon>
    </lineage>
</organism>
<gene>
    <name evidence="1" type="primary">mtnC</name>
    <name type="ordered locus">YPTB0875</name>
</gene>
<proteinExistence type="inferred from homology"/>
<accession>Q66E18</accession>
<feature type="chain" id="PRO_0000357442" description="Enolase-phosphatase E1">
    <location>
        <begin position="1"/>
        <end position="229"/>
    </location>
</feature>
<protein>
    <recommendedName>
        <fullName evidence="1">Enolase-phosphatase E1</fullName>
        <ecNumber evidence="1">3.1.3.77</ecNumber>
    </recommendedName>
    <alternativeName>
        <fullName evidence="1">2,3-diketo-5-methylthio-1-phosphopentane phosphatase</fullName>
    </alternativeName>
</protein>